<sequence>MASERPREPEGEDSIKLSADVKPFVPKFAGLNVAWSESSEACVFPGCAATYYPFVQESPAAEQKMYPEDMAFGAPAFPAQYVSSEIALHPFAYPTYALESTQSVCSVPTLQYDYSQAQCHPGFRPAKPRNEHACPPQEAKCVFKKKSSDERRAWEEQKSSNRRADGAVPCEARPARGSCHLKSDGYHKRPDRKSRILTKSASTSKPEFEFSRLDFPELQSPKNSNLPETQKQPRWGPLGPAASNMSLLGEAGKPVADMVEGKMVKTDHTDGAVTNNAATSSPSCTRELSWTPMGYIVRQTVSSDSAAATETVNSIINLKKTTSSADAKNVSVTSEALSSDPSFSREKRVHPGPKAKASQGSELEQNESSKKNKKKKEKSKSSYEVLPVQEPPRIEDAEEFPNLSVASERRHRGESPKLQSKQQAQNDFKTGGKKSQVPVQLDLGGMLAALEKQQHAPHAKPSSRPVVFSVGAVPVLSKDASSGERGRRSSQVKTPHNPLDSSAPLMKKGKQREIPKAKKPTSLKKIILKERQERMQQRLQESAVSPTVASDDSQDVESGVTNQIPSPDNPTGPEKTEEPMSSTPVVEGESEEPAGTEFQRDPEACQPAPDSATFPKIHSRRFRDYCSQMLSKEVDACVTGLLKELVRFQDRMYQKDPVKAKTKRRLVLGLREVLKHLKLRKLKCIIISPNCEKTQSKGGLDDTLHTIIDCACEQNIPFVFALNRKALGRSLNKAVPVSIVGIFSYDGAQDQFHKMVELTMAARQAYKTMLETMRQEQAGEPGPQTPPSPPMQDPIQSTDEGTLASTGEEPHYIEIWRKHLEAYSQHALELEDSLEASTSQMMNLNL</sequence>
<keyword id="KW-0963">Cytoplasm</keyword>
<keyword id="KW-0539">Nucleus</keyword>
<keyword id="KW-0597">Phosphoprotein</keyword>
<keyword id="KW-0648">Protein biosynthesis</keyword>
<keyword id="KW-1185">Reference proteome</keyword>
<keyword id="KW-0694">RNA-binding</keyword>
<feature type="chain" id="PRO_0000097656" description="Selenocysteine insertion sequence-binding protein 2">
    <location>
        <begin position="1"/>
        <end position="846"/>
    </location>
</feature>
<feature type="region of interest" description="Disordered" evidence="3">
    <location>
        <begin position="151"/>
        <end position="246"/>
    </location>
</feature>
<feature type="region of interest" description="Disordered" evidence="3">
    <location>
        <begin position="266"/>
        <end position="288"/>
    </location>
</feature>
<feature type="region of interest" description="Disordered" evidence="3">
    <location>
        <begin position="321"/>
        <end position="440"/>
    </location>
</feature>
<feature type="region of interest" description="Disordered" evidence="3">
    <location>
        <begin position="448"/>
        <end position="467"/>
    </location>
</feature>
<feature type="region of interest" description="Disordered" evidence="3">
    <location>
        <begin position="475"/>
        <end position="613"/>
    </location>
</feature>
<feature type="region of interest" description="RNA-binding" evidence="2">
    <location>
        <begin position="666"/>
        <end position="687"/>
    </location>
</feature>
<feature type="region of interest" description="Disordered" evidence="3">
    <location>
        <begin position="774"/>
        <end position="804"/>
    </location>
</feature>
<feature type="short sequence motif" description="Nuclear localization signal" evidence="7">
    <location>
        <begin position="370"/>
        <end position="380"/>
    </location>
</feature>
<feature type="compositionally biased region" description="Basic and acidic residues" evidence="3">
    <location>
        <begin position="151"/>
        <end position="165"/>
    </location>
</feature>
<feature type="compositionally biased region" description="Basic and acidic residues" evidence="3">
    <location>
        <begin position="206"/>
        <end position="215"/>
    </location>
</feature>
<feature type="compositionally biased region" description="Polar residues" evidence="3">
    <location>
        <begin position="220"/>
        <end position="232"/>
    </location>
</feature>
<feature type="compositionally biased region" description="Polar residues" evidence="3">
    <location>
        <begin position="272"/>
        <end position="288"/>
    </location>
</feature>
<feature type="compositionally biased region" description="Polar residues" evidence="3">
    <location>
        <begin position="321"/>
        <end position="342"/>
    </location>
</feature>
<feature type="compositionally biased region" description="Polar residues" evidence="3">
    <location>
        <begin position="417"/>
        <end position="428"/>
    </location>
</feature>
<feature type="compositionally biased region" description="Basic and acidic residues" evidence="3">
    <location>
        <begin position="527"/>
        <end position="536"/>
    </location>
</feature>
<feature type="compositionally biased region" description="Polar residues" evidence="3">
    <location>
        <begin position="542"/>
        <end position="551"/>
    </location>
</feature>
<feature type="compositionally biased region" description="Pro residues" evidence="3">
    <location>
        <begin position="783"/>
        <end position="792"/>
    </location>
</feature>
<feature type="modified residue" description="Phosphoserine" evidence="8">
    <location>
        <position position="220"/>
    </location>
</feature>
<reference key="1">
    <citation type="journal article" date="2000" name="EMBO J.">
        <title>A novel RNA binding protein, SBP2, is required for the translation of mammalian selenoprotein mRNAs.</title>
        <authorList>
            <person name="Copeland P.R."/>
            <person name="Fletcher J.E."/>
            <person name="Carlson B.A."/>
            <person name="Hatfield D.L."/>
            <person name="Driscoll D.M."/>
        </authorList>
    </citation>
    <scope>NUCLEOTIDE SEQUENCE [MRNA]</scope>
    <scope>FUNCTION</scope>
    <scope>SUBCELLULAR LOCATION</scope>
    <scope>TISSUE SPECIFICITY</scope>
    <source>
        <tissue>Testis</tissue>
    </source>
</reference>
<reference key="2">
    <citation type="journal article" date="1999" name="J. Biol. Chem.">
        <title>Purification, redox sensitivity, and RNA binding properties of SECIS-binding protein 2, a protein involved in selenoprotein biosynthesis.</title>
        <authorList>
            <person name="Copeland P.R."/>
            <person name="Driscoll D.M."/>
        </authorList>
    </citation>
    <scope>FUNCTION</scope>
    <source>
        <tissue>Testis</tissue>
    </source>
</reference>
<reference key="3">
    <citation type="journal article" date="2012" name="Nat. Commun.">
        <title>Quantitative maps of protein phosphorylation sites across 14 different rat organs and tissues.</title>
        <authorList>
            <person name="Lundby A."/>
            <person name="Secher A."/>
            <person name="Lage K."/>
            <person name="Nordsborg N.B."/>
            <person name="Dmytriyev A."/>
            <person name="Lundby C."/>
            <person name="Olsen J.V."/>
        </authorList>
    </citation>
    <scope>PHOSPHORYLATION [LARGE SCALE ANALYSIS] AT SER-220</scope>
    <scope>IDENTIFICATION BY MASS SPECTROMETRY [LARGE SCALE ANALYSIS]</scope>
</reference>
<name>SEBP2_RAT</name>
<proteinExistence type="evidence at protein level"/>
<evidence type="ECO:0000250" key="1">
    <source>
        <dbReference type="UniProtKB" id="Q96T21"/>
    </source>
</evidence>
<evidence type="ECO:0000255" key="2"/>
<evidence type="ECO:0000256" key="3">
    <source>
        <dbReference type="SAM" id="MobiDB-lite"/>
    </source>
</evidence>
<evidence type="ECO:0000269" key="4">
    <source>
    </source>
</evidence>
<evidence type="ECO:0000269" key="5">
    <source>
    </source>
</evidence>
<evidence type="ECO:0000303" key="6">
    <source>
    </source>
</evidence>
<evidence type="ECO:0000305" key="7">
    <source>
    </source>
</evidence>
<evidence type="ECO:0007744" key="8">
    <source>
    </source>
</evidence>
<dbReference type="EMBL" id="AJ251245">
    <property type="protein sequence ID" value="CAB61692.1"/>
    <property type="molecule type" value="mRNA"/>
</dbReference>
<dbReference type="RefSeq" id="NP_076492.1">
    <property type="nucleotide sequence ID" value="NM_024002.1"/>
</dbReference>
<dbReference type="SMR" id="Q9QX72"/>
<dbReference type="FunCoup" id="Q9QX72">
    <property type="interactions" value="2394"/>
</dbReference>
<dbReference type="STRING" id="10116.ENSRNOP00000039532"/>
<dbReference type="ChEMBL" id="CHEMBL2176808"/>
<dbReference type="CarbonylDB" id="Q9QX72"/>
<dbReference type="GlyGen" id="Q9QX72">
    <property type="glycosylation" value="1 site"/>
</dbReference>
<dbReference type="iPTMnet" id="Q9QX72"/>
<dbReference type="PhosphoSitePlus" id="Q9QX72"/>
<dbReference type="PaxDb" id="10116-ENSRNOP00000039532"/>
<dbReference type="PeptideAtlas" id="Q9QX72"/>
<dbReference type="GeneID" id="79049"/>
<dbReference type="KEGG" id="rno:79049"/>
<dbReference type="AGR" id="RGD:620991"/>
<dbReference type="CTD" id="79048"/>
<dbReference type="RGD" id="620991">
    <property type="gene designation" value="Secisbp2"/>
</dbReference>
<dbReference type="eggNOG" id="ENOG502QUP4">
    <property type="taxonomic scope" value="Eukaryota"/>
</dbReference>
<dbReference type="InParanoid" id="Q9QX72"/>
<dbReference type="PhylomeDB" id="Q9QX72"/>
<dbReference type="PRO" id="PR:Q9QX72"/>
<dbReference type="Proteomes" id="UP000002494">
    <property type="component" value="Unplaced"/>
</dbReference>
<dbReference type="GO" id="GO:0005829">
    <property type="term" value="C:cytosol"/>
    <property type="evidence" value="ECO:0000304"/>
    <property type="project" value="Reactome"/>
</dbReference>
<dbReference type="GO" id="GO:0005739">
    <property type="term" value="C:mitochondrion"/>
    <property type="evidence" value="ECO:0000318"/>
    <property type="project" value="GO_Central"/>
</dbReference>
<dbReference type="GO" id="GO:0005634">
    <property type="term" value="C:nucleus"/>
    <property type="evidence" value="ECO:0007669"/>
    <property type="project" value="UniProtKB-SubCell"/>
</dbReference>
<dbReference type="GO" id="GO:1990904">
    <property type="term" value="C:ribonucleoprotein complex"/>
    <property type="evidence" value="ECO:0000266"/>
    <property type="project" value="RGD"/>
</dbReference>
<dbReference type="GO" id="GO:0003677">
    <property type="term" value="F:DNA binding"/>
    <property type="evidence" value="ECO:0000266"/>
    <property type="project" value="RGD"/>
</dbReference>
<dbReference type="GO" id="GO:0003730">
    <property type="term" value="F:mRNA 3'-UTR binding"/>
    <property type="evidence" value="ECO:0000314"/>
    <property type="project" value="RGD"/>
</dbReference>
<dbReference type="GO" id="GO:0043021">
    <property type="term" value="F:ribonucleoprotein complex binding"/>
    <property type="evidence" value="ECO:0000266"/>
    <property type="project" value="RGD"/>
</dbReference>
<dbReference type="GO" id="GO:0003723">
    <property type="term" value="F:RNA binding"/>
    <property type="evidence" value="ECO:0000314"/>
    <property type="project" value="RGD"/>
</dbReference>
<dbReference type="GO" id="GO:0035368">
    <property type="term" value="F:selenocysteine insertion sequence binding"/>
    <property type="evidence" value="ECO:0000314"/>
    <property type="project" value="UniProtKB"/>
</dbReference>
<dbReference type="GO" id="GO:0008135">
    <property type="term" value="F:translation factor activity, RNA binding"/>
    <property type="evidence" value="ECO:0000304"/>
    <property type="project" value="RGD"/>
</dbReference>
<dbReference type="GO" id="GO:0021884">
    <property type="term" value="P:forebrain neuron development"/>
    <property type="evidence" value="ECO:0000266"/>
    <property type="project" value="RGD"/>
</dbReference>
<dbReference type="GO" id="GO:0048255">
    <property type="term" value="P:mRNA stabilization"/>
    <property type="evidence" value="ECO:0000266"/>
    <property type="project" value="RGD"/>
</dbReference>
<dbReference type="GO" id="GO:2000623">
    <property type="term" value="P:negative regulation of nuclear-transcribed mRNA catabolic process, nonsense-mediated decay"/>
    <property type="evidence" value="ECO:0000266"/>
    <property type="project" value="RGD"/>
</dbReference>
<dbReference type="GO" id="GO:1904571">
    <property type="term" value="P:positive regulation of selenocysteine incorporation"/>
    <property type="evidence" value="ECO:0000314"/>
    <property type="project" value="RGD"/>
</dbReference>
<dbReference type="GO" id="GO:0006401">
    <property type="term" value="P:RNA catabolic process"/>
    <property type="evidence" value="ECO:0000266"/>
    <property type="project" value="RGD"/>
</dbReference>
<dbReference type="GO" id="GO:0001514">
    <property type="term" value="P:selenocysteine incorporation"/>
    <property type="evidence" value="ECO:0000314"/>
    <property type="project" value="UniProtKB"/>
</dbReference>
<dbReference type="GO" id="GO:0021756">
    <property type="term" value="P:striatum development"/>
    <property type="evidence" value="ECO:0000266"/>
    <property type="project" value="RGD"/>
</dbReference>
<dbReference type="GO" id="GO:0006412">
    <property type="term" value="P:translation"/>
    <property type="evidence" value="ECO:0000266"/>
    <property type="project" value="RGD"/>
</dbReference>
<dbReference type="FunFam" id="3.30.1330.30:FF:000004">
    <property type="entry name" value="selenocysteine insertion sequence-binding protein 2"/>
    <property type="match status" value="1"/>
</dbReference>
<dbReference type="Gene3D" id="3.30.1330.30">
    <property type="match status" value="1"/>
</dbReference>
<dbReference type="InterPro" id="IPR029064">
    <property type="entry name" value="Ribosomal_eL30-like_sf"/>
</dbReference>
<dbReference type="InterPro" id="IPR004038">
    <property type="entry name" value="Ribosomal_eL8/eL30/eS12/Gad45"/>
</dbReference>
<dbReference type="InterPro" id="IPR040051">
    <property type="entry name" value="SECISBP2"/>
</dbReference>
<dbReference type="PANTHER" id="PTHR13284">
    <property type="entry name" value="GH01354P"/>
    <property type="match status" value="1"/>
</dbReference>
<dbReference type="PANTHER" id="PTHR13284:SF9">
    <property type="entry name" value="SELENOCYSTEINE INSERTION SEQUENCE-BINDING PROTEIN 2"/>
    <property type="match status" value="1"/>
</dbReference>
<dbReference type="Pfam" id="PF01248">
    <property type="entry name" value="Ribosomal_L7Ae"/>
    <property type="match status" value="1"/>
</dbReference>
<dbReference type="SUPFAM" id="SSF55315">
    <property type="entry name" value="L30e-like"/>
    <property type="match status" value="1"/>
</dbReference>
<accession>Q9QX72</accession>
<comment type="function">
    <text evidence="1 4 5">mRNA-binding protein that binds to the SECIS (selenocysteine insertion sequence) element present in the 3'-UTR of mRNAs encoding selenoproteins and facilitates the incorporation of the rare amino acid selenocysteine (PubMed:10464275, PubMed:10637234). Insertion of selenocysteine at UGA codons is mediated by SECISBP2 and EEFSEC: SECISBP2 (1) specifically binds the SECIS sequence once the 80S ribosome encounters an in-frame UGA codon and (2) contacts the RPS27A/eS31 of the 40S ribosome before ribosome stalling (By similarity). (3) GTP-bound EEFSEC then delivers selenocysteinyl-tRNA(Sec) to the 80S ribosome and adopts a preaccommodated state conformation (By similarity). (4) After GTP hydrolysis, EEFSEC dissociates from the assembly, selenocysteinyl-tRNA(Sec) accommodates, and peptide bond synthesis and selenoprotein elongation occur (By similarity).</text>
</comment>
<comment type="subcellular location">
    <subcellularLocation>
        <location evidence="7">Cytoplasm</location>
    </subcellularLocation>
    <subcellularLocation>
        <location evidence="7">Nucleus</location>
    </subcellularLocation>
</comment>
<comment type="tissue specificity">
    <text evidence="5">Ubiquitous.</text>
</comment>
<gene>
    <name type="primary">Secisbp2</name>
    <name evidence="6" type="synonym">Sbp2</name>
</gene>
<organism>
    <name type="scientific">Rattus norvegicus</name>
    <name type="common">Rat</name>
    <dbReference type="NCBI Taxonomy" id="10116"/>
    <lineage>
        <taxon>Eukaryota</taxon>
        <taxon>Metazoa</taxon>
        <taxon>Chordata</taxon>
        <taxon>Craniata</taxon>
        <taxon>Vertebrata</taxon>
        <taxon>Euteleostomi</taxon>
        <taxon>Mammalia</taxon>
        <taxon>Eutheria</taxon>
        <taxon>Euarchontoglires</taxon>
        <taxon>Glires</taxon>
        <taxon>Rodentia</taxon>
        <taxon>Myomorpha</taxon>
        <taxon>Muroidea</taxon>
        <taxon>Muridae</taxon>
        <taxon>Murinae</taxon>
        <taxon>Rattus</taxon>
    </lineage>
</organism>
<protein>
    <recommendedName>
        <fullName evidence="6">Selenocysteine insertion sequence-binding protein 2</fullName>
        <shortName evidence="6">SECIS-binding protein 2</shortName>
    </recommendedName>
</protein>